<sequence>MCCSILHHRNPRREHEFPAVVTSPVTENHIFLGGAGERGLTINGTFIKFTCIGVYLEDKADKSLATKWEGKLEELLETLDFYRDIISGPFEKLIRRSKIKELSGPEYSRKVMENCVAHLKSVGTYGDAEVEAIQNLQKLSRMLIFHLVLLKKNRQSPDGILGLSSSKDISIPEKEDAIIENKAASSAVLETMIGEHAVSPDLKRCLAARLPALLNEGTFKIGN</sequence>
<name>CFI_PEA</name>
<gene>
    <name type="primary">CHI</name>
</gene>
<organism>
    <name type="scientific">Pisum sativum</name>
    <name type="common">Garden pea</name>
    <name type="synonym">Lathyrus oleraceus</name>
    <dbReference type="NCBI Taxonomy" id="3888"/>
    <lineage>
        <taxon>Eukaryota</taxon>
        <taxon>Viridiplantae</taxon>
        <taxon>Streptophyta</taxon>
        <taxon>Embryophyta</taxon>
        <taxon>Tracheophyta</taxon>
        <taxon>Spermatophyta</taxon>
        <taxon>Magnoliopsida</taxon>
        <taxon>eudicotyledons</taxon>
        <taxon>Gunneridae</taxon>
        <taxon>Pentapetalae</taxon>
        <taxon>rosids</taxon>
        <taxon>fabids</taxon>
        <taxon>Fabales</taxon>
        <taxon>Fabaceae</taxon>
        <taxon>Papilionoideae</taxon>
        <taxon>50 kb inversion clade</taxon>
        <taxon>NPAAA clade</taxon>
        <taxon>Hologalegina</taxon>
        <taxon>IRL clade</taxon>
        <taxon>Fabeae</taxon>
        <taxon>Pisum</taxon>
    </lineage>
</organism>
<reference key="1">
    <citation type="journal article" date="1994" name="Plant Physiol.">
        <title>A cDNA encoding chalcone isomerase from aged pea epicotyls.</title>
        <authorList>
            <person name="Wood A.J."/>
            <person name="Davies E."/>
        </authorList>
    </citation>
    <scope>NUCLEOTIDE SEQUENCE [MRNA]</scope>
    <source>
        <strain>cv. Alaska</strain>
    </source>
</reference>
<feature type="chain" id="PRO_0000166436" description="Chalcone--flavanone isomerase">
    <location>
        <begin position="1"/>
        <end position="223"/>
    </location>
</feature>
<feature type="binding site" evidence="1">
    <location>
        <position position="50"/>
    </location>
    <ligand>
        <name>substrate</name>
    </ligand>
</feature>
<feature type="binding site" evidence="1">
    <location>
        <position position="114"/>
    </location>
    <ligand>
        <name>substrate</name>
    </ligand>
</feature>
<feature type="binding site" evidence="1">
    <location>
        <position position="191"/>
    </location>
    <ligand>
        <name>substrate</name>
    </ligand>
</feature>
<feature type="site" description="Important for catalytic activity" evidence="1">
    <location>
        <position position="107"/>
    </location>
</feature>
<dbReference type="EC" id="5.5.1.6"/>
<dbReference type="EMBL" id="U03433">
    <property type="protein sequence ID" value="AAA50174.1"/>
    <property type="molecule type" value="mRNA"/>
</dbReference>
<dbReference type="PIR" id="T06421">
    <property type="entry name" value="T06421"/>
</dbReference>
<dbReference type="SMR" id="P41089"/>
<dbReference type="UniPathway" id="UPA00154"/>
<dbReference type="GO" id="GO:0045430">
    <property type="term" value="F:chalcone isomerase activity"/>
    <property type="evidence" value="ECO:0007669"/>
    <property type="project" value="UniProtKB-EC"/>
</dbReference>
<dbReference type="GO" id="GO:0009813">
    <property type="term" value="P:flavonoid biosynthetic process"/>
    <property type="evidence" value="ECO:0007669"/>
    <property type="project" value="UniProtKB-UniPathway"/>
</dbReference>
<dbReference type="Gene3D" id="1.10.890.20">
    <property type="match status" value="1"/>
</dbReference>
<dbReference type="Gene3D" id="3.50.70.10">
    <property type="match status" value="1"/>
</dbReference>
<dbReference type="InterPro" id="IPR044164">
    <property type="entry name" value="CFI"/>
</dbReference>
<dbReference type="InterPro" id="IPR016087">
    <property type="entry name" value="Chalcone_isomerase"/>
</dbReference>
<dbReference type="InterPro" id="IPR016088">
    <property type="entry name" value="Chalcone_isomerase_3-sand"/>
</dbReference>
<dbReference type="InterPro" id="IPR016089">
    <property type="entry name" value="Chalcone_isomerase_bundle_sf"/>
</dbReference>
<dbReference type="InterPro" id="IPR036298">
    <property type="entry name" value="Chalcone_isomerase_sf"/>
</dbReference>
<dbReference type="PANTHER" id="PTHR28039:SF10">
    <property type="entry name" value="CHALCONE--FLAVANONE ISOMERASE 1A"/>
    <property type="match status" value="1"/>
</dbReference>
<dbReference type="PANTHER" id="PTHR28039">
    <property type="entry name" value="CHALCONE--FLAVONONE ISOMERASE 1-RELATED"/>
    <property type="match status" value="1"/>
</dbReference>
<dbReference type="Pfam" id="PF02431">
    <property type="entry name" value="Chalcone"/>
    <property type="match status" value="1"/>
</dbReference>
<dbReference type="SUPFAM" id="SSF54626">
    <property type="entry name" value="Chalcone isomerase"/>
    <property type="match status" value="1"/>
</dbReference>
<keyword id="KW-0284">Flavonoid biosynthesis</keyword>
<keyword id="KW-0413">Isomerase</keyword>
<comment type="function">
    <text evidence="1">Catalyzes the intramolecular cyclization of bicyclic chalcones into tricyclic (S)-flavanones. Responsible for the isomerization of 4,2',4',6'-tetrahydroxychalcone (also termed chalcone) into naringenin (By similarity).</text>
</comment>
<comment type="catalytic activity">
    <reaction>
        <text>a chalcone = a flavanone.</text>
        <dbReference type="EC" id="5.5.1.6"/>
    </reaction>
</comment>
<comment type="pathway">
    <text>Secondary metabolite biosynthesis; flavonoid biosynthesis.</text>
</comment>
<comment type="miscellaneous">
    <text>Part of the biosynthetic pathway for all classes of flavonoids, a large class of secondary plant metabolites, many of which are brightly colored.</text>
</comment>
<comment type="similarity">
    <text evidence="2">Belongs to the chalcone isomerase family.</text>
</comment>
<accession>P41089</accession>
<proteinExistence type="evidence at transcript level"/>
<protein>
    <recommendedName>
        <fullName>Chalcone--flavanone isomerase</fullName>
        <shortName>Chalcone isomerase</shortName>
        <ecNumber>5.5.1.6</ecNumber>
    </recommendedName>
</protein>
<evidence type="ECO:0000250" key="1"/>
<evidence type="ECO:0000305" key="2"/>